<gene>
    <name type="primary">Atp1b1</name>
    <name type="synonym">Atp4b</name>
</gene>
<feature type="chain" id="PRO_0000219098" description="Sodium/potassium-transporting ATPase subunit beta-1">
    <location>
        <begin position="1"/>
        <end position="304"/>
    </location>
</feature>
<feature type="topological domain" description="Cytoplasmic" evidence="4">
    <location>
        <begin position="1"/>
        <end position="34"/>
    </location>
</feature>
<feature type="transmembrane region" description="Helical; Signal-anchor for type II membrane protein" evidence="4">
    <location>
        <begin position="35"/>
        <end position="62"/>
    </location>
</feature>
<feature type="topological domain" description="Extracellular" evidence="4">
    <location>
        <begin position="63"/>
        <end position="304"/>
    </location>
</feature>
<feature type="region of interest" description="immunoglobulin-like" evidence="1">
    <location>
        <begin position="191"/>
        <end position="304"/>
    </location>
</feature>
<feature type="modified residue" description="Phosphoserine" evidence="3">
    <location>
        <position position="11"/>
    </location>
</feature>
<feature type="modified residue" description="Phosphotyrosine" evidence="12">
    <location>
        <position position="101"/>
    </location>
</feature>
<feature type="glycosylation site" description="N-linked (GlcNAc...) asparagine" evidence="7">
    <location>
        <position position="158"/>
    </location>
</feature>
<feature type="glycosylation site" description="N-linked (GlcNAc...) asparagine" evidence="1">
    <location>
        <position position="193"/>
    </location>
</feature>
<feature type="glycosylation site" description="N-linked (GlcNAc...) asparagine" evidence="7">
    <location>
        <position position="266"/>
    </location>
</feature>
<feature type="disulfide bond" evidence="1">
    <location>
        <begin position="126"/>
        <end position="149"/>
    </location>
</feature>
<feature type="disulfide bond" evidence="1">
    <location>
        <begin position="159"/>
        <end position="175"/>
    </location>
</feature>
<feature type="disulfide bond" evidence="1">
    <location>
        <begin position="214"/>
        <end position="277"/>
    </location>
</feature>
<organism>
    <name type="scientific">Mus musculus</name>
    <name type="common">Mouse</name>
    <dbReference type="NCBI Taxonomy" id="10090"/>
    <lineage>
        <taxon>Eukaryota</taxon>
        <taxon>Metazoa</taxon>
        <taxon>Chordata</taxon>
        <taxon>Craniata</taxon>
        <taxon>Vertebrata</taxon>
        <taxon>Euteleostomi</taxon>
        <taxon>Mammalia</taxon>
        <taxon>Eutheria</taxon>
        <taxon>Euarchontoglires</taxon>
        <taxon>Glires</taxon>
        <taxon>Rodentia</taxon>
        <taxon>Myomorpha</taxon>
        <taxon>Muroidea</taxon>
        <taxon>Muridae</taxon>
        <taxon>Murinae</taxon>
        <taxon>Mus</taxon>
        <taxon>Mus</taxon>
    </lineage>
</organism>
<evidence type="ECO:0000250" key="1"/>
<evidence type="ECO:0000250" key="2">
    <source>
        <dbReference type="UniProtKB" id="P05026"/>
    </source>
</evidence>
<evidence type="ECO:0000250" key="3">
    <source>
        <dbReference type="UniProtKB" id="P07340"/>
    </source>
</evidence>
<evidence type="ECO:0000255" key="4"/>
<evidence type="ECO:0000269" key="5">
    <source>
    </source>
</evidence>
<evidence type="ECO:0000269" key="6">
    <source>
    </source>
</evidence>
<evidence type="ECO:0000269" key="7">
    <source>
    </source>
</evidence>
<evidence type="ECO:0000269" key="8">
    <source>
    </source>
</evidence>
<evidence type="ECO:0000269" key="9">
    <source>
    </source>
</evidence>
<evidence type="ECO:0000269" key="10">
    <source>
    </source>
</evidence>
<evidence type="ECO:0000305" key="11"/>
<evidence type="ECO:0007744" key="12">
    <source>
    </source>
</evidence>
<dbReference type="EMBL" id="X16646">
    <property type="protein sequence ID" value="CAA34639.1"/>
    <property type="molecule type" value="mRNA"/>
</dbReference>
<dbReference type="EMBL" id="BC027319">
    <property type="protein sequence ID" value="AAH27319.1"/>
    <property type="molecule type" value="mRNA"/>
</dbReference>
<dbReference type="EMBL" id="X61433">
    <property type="protein sequence ID" value="CAA43675.1"/>
    <property type="molecule type" value="mRNA"/>
</dbReference>
<dbReference type="CCDS" id="CCDS35755.1"/>
<dbReference type="PIR" id="S09601">
    <property type="entry name" value="S09601"/>
</dbReference>
<dbReference type="RefSeq" id="NP_033851.1">
    <property type="nucleotide sequence ID" value="NM_009721.6"/>
</dbReference>
<dbReference type="SMR" id="P14094"/>
<dbReference type="BioGRID" id="198244">
    <property type="interactions" value="23"/>
</dbReference>
<dbReference type="ComplexPortal" id="CPX-126">
    <property type="entry name" value="Sodium:potassium-exchanging ATPase complex, FXYD2 variant"/>
</dbReference>
<dbReference type="CORUM" id="P14094"/>
<dbReference type="FunCoup" id="P14094">
    <property type="interactions" value="1425"/>
</dbReference>
<dbReference type="IntAct" id="P14094">
    <property type="interactions" value="95"/>
</dbReference>
<dbReference type="STRING" id="10090.ENSMUSP00000027863"/>
<dbReference type="GlyConnect" id="2727">
    <property type="glycosylation" value="14 N-Linked glycans (3 sites)"/>
</dbReference>
<dbReference type="GlyCosmos" id="P14094">
    <property type="glycosylation" value="3 sites, 50 glycans"/>
</dbReference>
<dbReference type="GlyGen" id="P14094">
    <property type="glycosylation" value="4 sites, 16 N-linked glycans (3 sites), 1 O-linked glycan (1 site)"/>
</dbReference>
<dbReference type="iPTMnet" id="P14094"/>
<dbReference type="MetOSite" id="P14094"/>
<dbReference type="PhosphoSitePlus" id="P14094"/>
<dbReference type="SwissPalm" id="P14094"/>
<dbReference type="jPOST" id="P14094"/>
<dbReference type="PaxDb" id="10090-ENSMUSP00000027863"/>
<dbReference type="PeptideAtlas" id="P14094"/>
<dbReference type="ProteomicsDB" id="277120"/>
<dbReference type="Pumba" id="P14094"/>
<dbReference type="Antibodypedia" id="2485">
    <property type="antibodies" value="324 antibodies from 36 providers"/>
</dbReference>
<dbReference type="DNASU" id="11931"/>
<dbReference type="Ensembl" id="ENSMUST00000027863.13">
    <property type="protein sequence ID" value="ENSMUSP00000027863.8"/>
    <property type="gene ID" value="ENSMUSG00000026576.13"/>
</dbReference>
<dbReference type="GeneID" id="11931"/>
<dbReference type="KEGG" id="mmu:11931"/>
<dbReference type="UCSC" id="uc007dip.2">
    <property type="organism name" value="mouse"/>
</dbReference>
<dbReference type="AGR" id="MGI:88108"/>
<dbReference type="CTD" id="481"/>
<dbReference type="MGI" id="MGI:88108">
    <property type="gene designation" value="Atp1b1"/>
</dbReference>
<dbReference type="VEuPathDB" id="HostDB:ENSMUSG00000026576"/>
<dbReference type="eggNOG" id="KOG3927">
    <property type="taxonomic scope" value="Eukaryota"/>
</dbReference>
<dbReference type="GeneTree" id="ENSGT01030000234579"/>
<dbReference type="HOGENOM" id="CLU_057702_2_0_1"/>
<dbReference type="InParanoid" id="P14094"/>
<dbReference type="OMA" id="WEGFRVF"/>
<dbReference type="OrthoDB" id="5912413at2759"/>
<dbReference type="PhylomeDB" id="P14094"/>
<dbReference type="TreeFam" id="TF314618"/>
<dbReference type="Reactome" id="R-MMU-210991">
    <property type="pathway name" value="Basigin interactions"/>
</dbReference>
<dbReference type="Reactome" id="R-MMU-5578775">
    <property type="pathway name" value="Ion homeostasis"/>
</dbReference>
<dbReference type="Reactome" id="R-MMU-936837">
    <property type="pathway name" value="Ion transport by P-type ATPases"/>
</dbReference>
<dbReference type="BioGRID-ORCS" id="11931">
    <property type="hits" value="1 hit in 79 CRISPR screens"/>
</dbReference>
<dbReference type="CD-CODE" id="CE726F99">
    <property type="entry name" value="Postsynaptic density"/>
</dbReference>
<dbReference type="ChiTaRS" id="Atp1b1">
    <property type="organism name" value="mouse"/>
</dbReference>
<dbReference type="PRO" id="PR:P14094"/>
<dbReference type="Proteomes" id="UP000000589">
    <property type="component" value="Chromosome 1"/>
</dbReference>
<dbReference type="RNAct" id="P14094">
    <property type="molecule type" value="protein"/>
</dbReference>
<dbReference type="Bgee" id="ENSMUSG00000026576">
    <property type="expression patterns" value="Expressed in olfactory tubercle and 370 other cell types or tissues"/>
</dbReference>
<dbReference type="ExpressionAtlas" id="P14094">
    <property type="expression patterns" value="baseline and differential"/>
</dbReference>
<dbReference type="GO" id="GO:0016324">
    <property type="term" value="C:apical plasma membrane"/>
    <property type="evidence" value="ECO:0000314"/>
    <property type="project" value="MGI"/>
</dbReference>
<dbReference type="GO" id="GO:0016323">
    <property type="term" value="C:basolateral plasma membrane"/>
    <property type="evidence" value="ECO:0000314"/>
    <property type="project" value="MGI"/>
</dbReference>
<dbReference type="GO" id="GO:0005901">
    <property type="term" value="C:caveola"/>
    <property type="evidence" value="ECO:0007669"/>
    <property type="project" value="Ensembl"/>
</dbReference>
<dbReference type="GO" id="GO:0014704">
    <property type="term" value="C:intercalated disc"/>
    <property type="evidence" value="ECO:0000315"/>
    <property type="project" value="BHF-UCL"/>
</dbReference>
<dbReference type="GO" id="GO:0016328">
    <property type="term" value="C:lateral plasma membrane"/>
    <property type="evidence" value="ECO:0007669"/>
    <property type="project" value="Ensembl"/>
</dbReference>
<dbReference type="GO" id="GO:0043209">
    <property type="term" value="C:myelin sheath"/>
    <property type="evidence" value="ECO:0007005"/>
    <property type="project" value="UniProtKB"/>
</dbReference>
<dbReference type="GO" id="GO:0031090">
    <property type="term" value="C:organelle membrane"/>
    <property type="evidence" value="ECO:0007669"/>
    <property type="project" value="Ensembl"/>
</dbReference>
<dbReference type="GO" id="GO:0005886">
    <property type="term" value="C:plasma membrane"/>
    <property type="evidence" value="ECO:0000314"/>
    <property type="project" value="MGI"/>
</dbReference>
<dbReference type="GO" id="GO:0042383">
    <property type="term" value="C:sarcolemma"/>
    <property type="evidence" value="ECO:0000315"/>
    <property type="project" value="BHF-UCL"/>
</dbReference>
<dbReference type="GO" id="GO:0005890">
    <property type="term" value="C:sodium:potassium-exchanging ATPase complex"/>
    <property type="evidence" value="ECO:0000315"/>
    <property type="project" value="BHF-UCL"/>
</dbReference>
<dbReference type="GO" id="GO:0036126">
    <property type="term" value="C:sperm flagellum"/>
    <property type="evidence" value="ECO:0007669"/>
    <property type="project" value="Ensembl"/>
</dbReference>
<dbReference type="GO" id="GO:0030315">
    <property type="term" value="C:T-tubule"/>
    <property type="evidence" value="ECO:0007669"/>
    <property type="project" value="Ensembl"/>
</dbReference>
<dbReference type="GO" id="GO:0001671">
    <property type="term" value="F:ATPase activator activity"/>
    <property type="evidence" value="ECO:0000315"/>
    <property type="project" value="BHF-UCL"/>
</dbReference>
<dbReference type="GO" id="GO:0051117">
    <property type="term" value="F:ATPase binding"/>
    <property type="evidence" value="ECO:0007669"/>
    <property type="project" value="Ensembl"/>
</dbReference>
<dbReference type="GO" id="GO:0005391">
    <property type="term" value="F:P-type sodium:potassium-exchanging transporter activity"/>
    <property type="evidence" value="ECO:0007669"/>
    <property type="project" value="Ensembl"/>
</dbReference>
<dbReference type="GO" id="GO:0046982">
    <property type="term" value="F:protein heterodimerization activity"/>
    <property type="evidence" value="ECO:0007669"/>
    <property type="project" value="Ensembl"/>
</dbReference>
<dbReference type="GO" id="GO:0019901">
    <property type="term" value="F:protein kinase binding"/>
    <property type="evidence" value="ECO:0000353"/>
    <property type="project" value="UniProtKB"/>
</dbReference>
<dbReference type="GO" id="GO:0030674">
    <property type="term" value="F:protein-macromolecule adaptor activity"/>
    <property type="evidence" value="ECO:0007669"/>
    <property type="project" value="Ensembl"/>
</dbReference>
<dbReference type="GO" id="GO:0141109">
    <property type="term" value="F:transporter activator activity"/>
    <property type="evidence" value="ECO:0007669"/>
    <property type="project" value="Ensembl"/>
</dbReference>
<dbReference type="GO" id="GO:0046034">
    <property type="term" value="P:ATP metabolic process"/>
    <property type="evidence" value="ECO:0007669"/>
    <property type="project" value="Ensembl"/>
</dbReference>
<dbReference type="GO" id="GO:0060048">
    <property type="term" value="P:cardiac muscle contraction"/>
    <property type="evidence" value="ECO:0000315"/>
    <property type="project" value="BHF-UCL"/>
</dbReference>
<dbReference type="GO" id="GO:0007155">
    <property type="term" value="P:cell adhesion"/>
    <property type="evidence" value="ECO:0007669"/>
    <property type="project" value="UniProtKB-KW"/>
</dbReference>
<dbReference type="GO" id="GO:0010248">
    <property type="term" value="P:establishment or maintenance of transmembrane electrochemical gradient"/>
    <property type="evidence" value="ECO:0000303"/>
    <property type="project" value="ComplexPortal"/>
</dbReference>
<dbReference type="GO" id="GO:0006874">
    <property type="term" value="P:intracellular calcium ion homeostasis"/>
    <property type="evidence" value="ECO:0000315"/>
    <property type="project" value="BHF-UCL"/>
</dbReference>
<dbReference type="GO" id="GO:0030007">
    <property type="term" value="P:intracellular potassium ion homeostasis"/>
    <property type="evidence" value="ECO:0000266"/>
    <property type="project" value="ComplexPortal"/>
</dbReference>
<dbReference type="GO" id="GO:0006883">
    <property type="term" value="P:intracellular sodium ion homeostasis"/>
    <property type="evidence" value="ECO:0000266"/>
    <property type="project" value="ComplexPortal"/>
</dbReference>
<dbReference type="GO" id="GO:0086009">
    <property type="term" value="P:membrane repolarization"/>
    <property type="evidence" value="ECO:0007669"/>
    <property type="project" value="Ensembl"/>
</dbReference>
<dbReference type="GO" id="GO:1903288">
    <property type="term" value="P:positive regulation of potassium ion import across plasma membrane"/>
    <property type="evidence" value="ECO:0007669"/>
    <property type="project" value="Ensembl"/>
</dbReference>
<dbReference type="GO" id="GO:1903278">
    <property type="term" value="P:positive regulation of sodium ion export across plasma membrane"/>
    <property type="evidence" value="ECO:0007669"/>
    <property type="project" value="Ensembl"/>
</dbReference>
<dbReference type="GO" id="GO:1990573">
    <property type="term" value="P:potassium ion import across plasma membrane"/>
    <property type="evidence" value="ECO:0000315"/>
    <property type="project" value="BHF-UCL"/>
</dbReference>
<dbReference type="GO" id="GO:0072659">
    <property type="term" value="P:protein localization to plasma membrane"/>
    <property type="evidence" value="ECO:0007669"/>
    <property type="project" value="Ensembl"/>
</dbReference>
<dbReference type="GO" id="GO:0050821">
    <property type="term" value="P:protein stabilization"/>
    <property type="evidence" value="ECO:0000315"/>
    <property type="project" value="BHF-UCL"/>
</dbReference>
<dbReference type="GO" id="GO:1902600">
    <property type="term" value="P:proton transmembrane transport"/>
    <property type="evidence" value="ECO:0000303"/>
    <property type="project" value="ComplexPortal"/>
</dbReference>
<dbReference type="GO" id="GO:1903169">
    <property type="term" value="P:regulation of calcium ion transmembrane transport"/>
    <property type="evidence" value="ECO:0000315"/>
    <property type="project" value="BHF-UCL"/>
</dbReference>
<dbReference type="GO" id="GO:0010882">
    <property type="term" value="P:regulation of cardiac muscle contraction by calcium ion signaling"/>
    <property type="evidence" value="ECO:0000315"/>
    <property type="project" value="BHF-UCL"/>
</dbReference>
<dbReference type="GO" id="GO:0010468">
    <property type="term" value="P:regulation of gene expression"/>
    <property type="evidence" value="ECO:0000315"/>
    <property type="project" value="BHF-UCL"/>
</dbReference>
<dbReference type="GO" id="GO:0055119">
    <property type="term" value="P:relaxation of cardiac muscle"/>
    <property type="evidence" value="ECO:0000315"/>
    <property type="project" value="BHF-UCL"/>
</dbReference>
<dbReference type="GO" id="GO:0001666">
    <property type="term" value="P:response to hypoxia"/>
    <property type="evidence" value="ECO:0007669"/>
    <property type="project" value="Ensembl"/>
</dbReference>
<dbReference type="GO" id="GO:0036376">
    <property type="term" value="P:sodium ion export across plasma membrane"/>
    <property type="evidence" value="ECO:0000315"/>
    <property type="project" value="BHF-UCL"/>
</dbReference>
<dbReference type="FunFam" id="1.20.5.170:FF:000062">
    <property type="entry name" value="Sodium/potassium-transporting ATPase subunit beta"/>
    <property type="match status" value="1"/>
</dbReference>
<dbReference type="FunFam" id="2.60.40.1660:FF:000002">
    <property type="entry name" value="Sodium/potassium-transporting ATPase subunit beta"/>
    <property type="match status" value="1"/>
</dbReference>
<dbReference type="Gene3D" id="1.20.5.170">
    <property type="match status" value="1"/>
</dbReference>
<dbReference type="Gene3D" id="2.60.40.1660">
    <property type="entry name" value="Na, k-atpase alpha subunit"/>
    <property type="match status" value="1"/>
</dbReference>
<dbReference type="InterPro" id="IPR000402">
    <property type="entry name" value="Na/K_ATPase_sub_beta"/>
</dbReference>
<dbReference type="InterPro" id="IPR038702">
    <property type="entry name" value="Na/K_ATPase_sub_beta_sf"/>
</dbReference>
<dbReference type="NCBIfam" id="TIGR01107">
    <property type="entry name" value="Na_K_ATPase_bet"/>
    <property type="match status" value="1"/>
</dbReference>
<dbReference type="PANTHER" id="PTHR11523">
    <property type="entry name" value="SODIUM/POTASSIUM-DEPENDENT ATPASE BETA SUBUNIT"/>
    <property type="match status" value="1"/>
</dbReference>
<dbReference type="PANTHER" id="PTHR11523:SF10">
    <property type="entry name" value="SODIUM_POTASSIUM-TRANSPORTING ATPASE SUBUNIT BETA-1"/>
    <property type="match status" value="1"/>
</dbReference>
<dbReference type="Pfam" id="PF00287">
    <property type="entry name" value="Na_K-ATPase"/>
    <property type="match status" value="1"/>
</dbReference>
<dbReference type="PROSITE" id="PS00390">
    <property type="entry name" value="ATPASE_NA_K_BETA_1"/>
    <property type="match status" value="1"/>
</dbReference>
<dbReference type="PROSITE" id="PS00391">
    <property type="entry name" value="ATPASE_NA_K_BETA_2"/>
    <property type="match status" value="1"/>
</dbReference>
<name>AT1B1_MOUSE</name>
<accession>P14094</accession>
<reference key="1">
    <citation type="journal article" date="1989" name="Nucleic Acids Res.">
        <title>Cloning and nucleotide sequence of the mouse Na,K-ATPase beta-subunit.</title>
        <authorList>
            <person name="Gloor S."/>
        </authorList>
    </citation>
    <scope>NUCLEOTIDE SEQUENCE [MRNA]</scope>
    <source>
        <strain>C57BL/6J</strain>
        <tissue>Brain</tissue>
    </source>
</reference>
<reference key="2">
    <citation type="journal article" date="2004" name="Genome Res.">
        <title>The status, quality, and expansion of the NIH full-length cDNA project: the Mammalian Gene Collection (MGC).</title>
        <authorList>
            <consortium name="The MGC Project Team"/>
        </authorList>
    </citation>
    <scope>NUCLEOTIDE SEQUENCE [LARGE SCALE MRNA]</scope>
    <source>
        <strain>129</strain>
        <tissue>Mammary gland</tissue>
    </source>
</reference>
<reference key="3">
    <citation type="submission" date="2007-04" db="UniProtKB">
        <authorList>
            <person name="Lubec G."/>
            <person name="Kang S.U."/>
        </authorList>
    </citation>
    <scope>PROTEIN SEQUENCE OF 15-21; 72-107; 171-179; 205-217; 225-249 AND 279-291</scope>
    <scope>IDENTIFICATION BY MASS SPECTROMETRY</scope>
    <source>
        <strain>C57BL/6J</strain>
        <tissue>Brain</tissue>
    </source>
</reference>
<reference key="4">
    <citation type="journal article" date="1990" name="Eur. J. Neurosci.">
        <title>A collection of cDNA clones with specific expression patterns in mouse brain.</title>
        <authorList>
            <person name="Kato K."/>
        </authorList>
    </citation>
    <scope>NUCLEOTIDE SEQUENCE [LARGE SCALE MRNA] OF 33-304</scope>
    <source>
        <strain>BALB/cJ</strain>
        <tissue>Brain</tissue>
    </source>
</reference>
<reference key="5">
    <citation type="journal article" date="2005" name="Mol. Biol. Cell">
        <title>FXYD3 (Mat-8), a new regulator of Na,K-ATPase.</title>
        <authorList>
            <person name="Crambert G."/>
            <person name="Li C."/>
            <person name="Claeys D."/>
            <person name="Geering K."/>
        </authorList>
    </citation>
    <scope>INTERACTION WITH FXYD3</scope>
</reference>
<reference key="6">
    <citation type="journal article" date="2007" name="Hum. Mol. Genet.">
        <title>A novel family of transmembrane proteins interacting with beta subunits of the Na,K-ATPase.</title>
        <authorList>
            <person name="Gorokhova S."/>
            <person name="Bibert S."/>
            <person name="Geering K."/>
            <person name="Heintz N."/>
        </authorList>
    </citation>
    <scope>INTERACTION WITH NKAIN1; NKAIN2 AND NKAIN4</scope>
    <source>
        <strain>C57BL/6J</strain>
    </source>
</reference>
<reference key="7">
    <citation type="journal article" date="2008" name="J. Proteome Res.">
        <title>Large-scale identification and evolution indexing of tyrosine phosphorylation sites from murine brain.</title>
        <authorList>
            <person name="Ballif B.A."/>
            <person name="Carey G.R."/>
            <person name="Sunyaev S.R."/>
            <person name="Gygi S.P."/>
        </authorList>
    </citation>
    <scope>PHOSPHORYLATION [LARGE SCALE ANALYSIS] AT TYR-101</scope>
    <scope>IDENTIFICATION BY MASS SPECTROMETRY [LARGE SCALE ANALYSIS]</scope>
    <source>
        <tissue>Brain</tissue>
    </source>
</reference>
<reference key="8">
    <citation type="journal article" date="2009" name="Nat. Biotechnol.">
        <title>Mass-spectrometric identification and relative quantification of N-linked cell surface glycoproteins.</title>
        <authorList>
            <person name="Wollscheid B."/>
            <person name="Bausch-Fluck D."/>
            <person name="Henderson C."/>
            <person name="O'Brien R."/>
            <person name="Bibel M."/>
            <person name="Schiess R."/>
            <person name="Aebersold R."/>
            <person name="Watts J.D."/>
        </authorList>
    </citation>
    <scope>GLYCOSYLATION [LARGE SCALE ANALYSIS] AT ASN-158 AND ASN-266</scope>
</reference>
<reference key="9">
    <citation type="journal article" date="2010" name="Cell">
        <title>A tissue-specific atlas of mouse protein phosphorylation and expression.</title>
        <authorList>
            <person name="Huttlin E.L."/>
            <person name="Jedrychowski M.P."/>
            <person name="Elias J.E."/>
            <person name="Goswami T."/>
            <person name="Rad R."/>
            <person name="Beausoleil S.A."/>
            <person name="Villen J."/>
            <person name="Haas W."/>
            <person name="Sowa M.E."/>
            <person name="Gygi S.P."/>
        </authorList>
    </citation>
    <scope>IDENTIFICATION BY MASS SPECTROMETRY [LARGE SCALE ANALYSIS]</scope>
    <source>
        <tissue>Brain</tissue>
        <tissue>Brown adipose tissue</tissue>
        <tissue>Heart</tissue>
        <tissue>Kidney</tissue>
        <tissue>Liver</tissue>
        <tissue>Lung</tissue>
        <tissue>Pancreas</tissue>
        <tissue>Spleen</tissue>
        <tissue>Testis</tissue>
    </source>
</reference>
<reference key="10">
    <citation type="journal article" date="2013" name="FASEB J.">
        <title>The kinase domains of obscurin interact with intercellular adhesion proteins.</title>
        <authorList>
            <person name="Hu L.Y."/>
            <person name="Kontrogianni-Konstantopoulos A."/>
        </authorList>
    </citation>
    <scope>INTERACTION WITH OBSCN</scope>
    <scope>SUBCELLULAR LOCATION</scope>
    <scope>TISSUE SPECIFICITY</scope>
</reference>
<reference key="11">
    <citation type="journal article" date="2011" name="J. Biol. Chem.">
        <title>FXYD proteins reverse inhibition of the Na+-K+ pump mediated by glutathionylation of its beta1 subunit.</title>
        <authorList>
            <person name="Bibert S."/>
            <person name="Liu C.C."/>
            <person name="Figtree G.A."/>
            <person name="Garcia A."/>
            <person name="Hamilton E.J."/>
            <person name="Marassi F.M."/>
            <person name="Sweadner K.J."/>
            <person name="Cornelius F."/>
            <person name="Geering K."/>
            <person name="Rasmussen H.H."/>
        </authorList>
    </citation>
    <scope>GLUTATHIONYLATION</scope>
</reference>
<reference key="12">
    <citation type="journal article" date="2018" name="Hypertension">
        <title>Dec1 and CLOCK regulate Na+/K+-ATPase beta1 subunit expression and blood pressure.</title>
        <authorList>
            <person name="Nakashima A."/>
            <person name="Kawamoto T."/>
            <person name="Noshiro M."/>
            <person name="Ueno T."/>
            <person name="Doi S."/>
            <person name="Honda K."/>
            <person name="Maruhashi T."/>
            <person name="Noma K."/>
            <person name="Honma S."/>
            <person name="Masaki T."/>
            <person name="Higashi Y."/>
            <person name="Kato Y."/>
        </authorList>
    </citation>
    <scope>TISSUE SPECIFICITY</scope>
</reference>
<comment type="function">
    <text>This is the non-catalytic component of the active enzyme, which catalyzes the hydrolysis of ATP coupled with the exchange of Na(+) and K(+) ions across the plasma membrane. The beta subunit regulates, through assembly of alpha/beta heterodimers, the number of sodium pumps transported to the plasma membrane.</text>
</comment>
<comment type="function">
    <text evidence="1">Involved in cell adhesion and establishing epithelial cell polarity.</text>
</comment>
<comment type="subunit">
    <text evidence="2 3 5 6 9">The sodium/potassium-transporting ATPase is composed of a catalytic alpha subunit, an auxiliary non-catalytic beta subunit and an additional regulatory subunit. Interacts with catalytic subunit ATP12A (By similarity). Interacts with regulatory subunit FXYD1 (By similarity). Interacts with regulatory subunit FXYD3 (PubMed:15743908). Interacts with NKAIN1, NKAIN2 and NKAIN4 (PubMed:17606467). Interacts with MLC1 (By similarity). Part of a complex containing MLC1, TRPV4, AQP4 and HEPACAM (By similarity). Interacts with KIRREL3 (By similarity). Interacts with OBSCN (via protein kinase domain 1) (PubMed:23392350).</text>
</comment>
<comment type="subcellular location">
    <subcellularLocation>
        <location evidence="4">Cell membrane</location>
        <topology evidence="4">Single-pass type II membrane protein</topology>
    </subcellularLocation>
    <subcellularLocation>
        <location evidence="3">Apical cell membrane</location>
        <topology evidence="4">Single-pass type II membrane protein</topology>
    </subcellularLocation>
    <subcellularLocation>
        <location evidence="9">Cell membrane</location>
        <location evidence="9">Sarcolemma</location>
    </subcellularLocation>
    <text evidence="9">Colocalizes with OBSCN at the intercalated disk and sarcolemma in cardiomyocytes. Localizes in long striations at the level of Z and M lines.</text>
</comment>
<comment type="tissue specificity">
    <text evidence="9 10">Expressed in cardiac muscle and in flexor digitorum brevis (FDB) muscle (at protein level) (PubMed:23392350). Expressed in a circadian manner in the kidney and aorta (at protein level) (PubMed:30012868).</text>
</comment>
<comment type="domain">
    <text evidence="1">The C-terminal lobe folds into an immunoglobulin-like domain and mediates cell adhesion properties.</text>
</comment>
<comment type="PTM">
    <text evidence="3 8">Glutathionylated (PubMed:21454534). N-glycosylated (By similarity).</text>
</comment>
<comment type="similarity">
    <text evidence="11">Belongs to the X(+)/potassium ATPases subunit beta family.</text>
</comment>
<keyword id="KW-0130">Cell adhesion</keyword>
<keyword id="KW-1003">Cell membrane</keyword>
<keyword id="KW-0903">Direct protein sequencing</keyword>
<keyword id="KW-1015">Disulfide bond</keyword>
<keyword id="KW-0318">Glutathionylation</keyword>
<keyword id="KW-0325">Glycoprotein</keyword>
<keyword id="KW-0406">Ion transport</keyword>
<keyword id="KW-0472">Membrane</keyword>
<keyword id="KW-0597">Phosphoprotein</keyword>
<keyword id="KW-0630">Potassium</keyword>
<keyword id="KW-0633">Potassium transport</keyword>
<keyword id="KW-1185">Reference proteome</keyword>
<keyword id="KW-0735">Signal-anchor</keyword>
<keyword id="KW-0915">Sodium</keyword>
<keyword id="KW-0739">Sodium transport</keyword>
<keyword id="KW-0740">Sodium/potassium transport</keyword>
<keyword id="KW-0812">Transmembrane</keyword>
<keyword id="KW-1133">Transmembrane helix</keyword>
<keyword id="KW-0813">Transport</keyword>
<proteinExistence type="evidence at protein level"/>
<sequence length="304" mass="35195">MARGKAKEEGSWKKFIWNSEKKEFLGRTGGSWFKILLFYVIFYGCLAGIFIGTIQVMLLTISELKPTYQDRVAPPGLTQIPQIQKTEISFRPNDPKSYEAYVLNIIRFLEKYKDSAQKDDMIFEDCGNVPSEPKERGDINHERGERKVCRFKLDWLGNCSGLNDDSYGYREGKPCIIIKLNRVLGFKPKPPKNESLETYPLMMKYNPNVLPVQCTGKRDEDKDKVGNIEYFGMGGYYGFPLQYYPYYGKLLQPKYLQPLLAVQFTNLTVDTEIRVECKAYGENIGYSEKDRFQGRFDVKIEIKS</sequence>
<protein>
    <recommendedName>
        <fullName>Sodium/potassium-transporting ATPase subunit beta-1</fullName>
    </recommendedName>
    <alternativeName>
        <fullName>Sodium/potassium-dependent ATPase subunit beta-1</fullName>
    </alternativeName>
</protein>